<proteinExistence type="evidence at protein level"/>
<evidence type="ECO:0000255" key="1"/>
<evidence type="ECO:0000269" key="2">
    <source>
    </source>
</evidence>
<evidence type="ECO:0000305" key="3"/>
<accession>P39196</accession>
<accession>Q2MA02</accession>
<accession>Q46934</accession>
<protein>
    <recommendedName>
        <fullName>Lysophospholipid transporter LplT</fullName>
    </recommendedName>
</protein>
<comment type="function">
    <text evidence="2">Catalyzes the facilitated diffusion of 2-acyl-glycero-3-phosphoethanolamine (2-acyl-GPE) into the cell.</text>
</comment>
<comment type="subcellular location">
    <subcellularLocation>
        <location>Cell inner membrane</location>
        <topology>Multi-pass membrane protein</topology>
    </subcellularLocation>
</comment>
<comment type="similarity">
    <text evidence="3">Belongs to the major facilitator superfamily. LplT (TC 2.A.1.42) family.</text>
</comment>
<comment type="sequence caution" evidence="3">
    <conflict type="frameshift">
        <sequence resource="EMBL" id="L14681"/>
    </conflict>
</comment>
<keyword id="KW-0997">Cell inner membrane</keyword>
<keyword id="KW-1003">Cell membrane</keyword>
<keyword id="KW-0445">Lipid transport</keyword>
<keyword id="KW-0472">Membrane</keyword>
<keyword id="KW-1185">Reference proteome</keyword>
<keyword id="KW-0812">Transmembrane</keyword>
<keyword id="KW-1133">Transmembrane helix</keyword>
<keyword id="KW-0813">Transport</keyword>
<organism>
    <name type="scientific">Escherichia coli (strain K12)</name>
    <dbReference type="NCBI Taxonomy" id="83333"/>
    <lineage>
        <taxon>Bacteria</taxon>
        <taxon>Pseudomonadati</taxon>
        <taxon>Pseudomonadota</taxon>
        <taxon>Gammaproteobacteria</taxon>
        <taxon>Enterobacterales</taxon>
        <taxon>Enterobacteriaceae</taxon>
        <taxon>Escherichia</taxon>
    </lineage>
</organism>
<reference key="1">
    <citation type="journal article" date="1997" name="Science">
        <title>The complete genome sequence of Escherichia coli K-12.</title>
        <authorList>
            <person name="Blattner F.R."/>
            <person name="Plunkett G. III"/>
            <person name="Bloch C.A."/>
            <person name="Perna N.T."/>
            <person name="Burland V."/>
            <person name="Riley M."/>
            <person name="Collado-Vides J."/>
            <person name="Glasner J.D."/>
            <person name="Rode C.K."/>
            <person name="Mayhew G.F."/>
            <person name="Gregor J."/>
            <person name="Davis N.W."/>
            <person name="Kirkpatrick H.A."/>
            <person name="Goeden M.A."/>
            <person name="Rose D.J."/>
            <person name="Mau B."/>
            <person name="Shao Y."/>
        </authorList>
    </citation>
    <scope>NUCLEOTIDE SEQUENCE [LARGE SCALE GENOMIC DNA]</scope>
    <source>
        <strain>K12 / MG1655 / ATCC 47076</strain>
    </source>
</reference>
<reference key="2">
    <citation type="journal article" date="2006" name="Mol. Syst. Biol.">
        <title>Highly accurate genome sequences of Escherichia coli K-12 strains MG1655 and W3110.</title>
        <authorList>
            <person name="Hayashi K."/>
            <person name="Morooka N."/>
            <person name="Yamamoto Y."/>
            <person name="Fujita K."/>
            <person name="Isono K."/>
            <person name="Choi S."/>
            <person name="Ohtsubo E."/>
            <person name="Baba T."/>
            <person name="Wanner B.L."/>
            <person name="Mori H."/>
            <person name="Horiuchi T."/>
        </authorList>
    </citation>
    <scope>NUCLEOTIDE SEQUENCE [LARGE SCALE GENOMIC DNA]</scope>
    <source>
        <strain>K12 / W3110 / ATCC 27325 / DSM 5911</strain>
    </source>
</reference>
<reference key="3">
    <citation type="journal article" date="1994" name="J. Biol. Chem.">
        <title>Sequence and function of the aas gene in Escherichia coli.</title>
        <authorList>
            <person name="Jackowski S."/>
            <person name="Jackson P.D."/>
            <person name="Rock C.O."/>
        </authorList>
    </citation>
    <scope>NUCLEOTIDE SEQUENCE [GENOMIC DNA] OF 1-142</scope>
    <source>
        <strain>K12</strain>
    </source>
</reference>
<reference key="4">
    <citation type="journal article" date="2005" name="J. Biol. Chem.">
        <title>Lysophospholipid flipping across the Escherichia coli inner membrane catalyzed by a transporter (LplT) belonging to the major facilitator superfamily.</title>
        <authorList>
            <person name="Harvat E.M."/>
            <person name="Zhang Y.-M."/>
            <person name="Tran C.V."/>
            <person name="Zhang Z."/>
            <person name="Frank M.W."/>
            <person name="Rock C.O."/>
            <person name="Saier M.H. Jr."/>
        </authorList>
    </citation>
    <scope>FUNCTION IN ACYL-GPE TRANSPORT</scope>
    <source>
        <strain>K12 / BW25113</strain>
    </source>
</reference>
<reference key="5">
    <citation type="journal article" date="2005" name="Science">
        <title>Global topology analysis of the Escherichia coli inner membrane proteome.</title>
        <authorList>
            <person name="Daley D.O."/>
            <person name="Rapp M."/>
            <person name="Granseth E."/>
            <person name="Melen K."/>
            <person name="Drew D."/>
            <person name="von Heijne G."/>
        </authorList>
    </citation>
    <scope>TOPOLOGY [LARGE SCALE ANALYSIS]</scope>
    <source>
        <strain>K12 / MG1655 / ATCC 47076</strain>
    </source>
</reference>
<dbReference type="EMBL" id="U29581">
    <property type="protein sequence ID" value="AAB40482.1"/>
    <property type="molecule type" value="Genomic_DNA"/>
</dbReference>
<dbReference type="EMBL" id="U00096">
    <property type="protein sequence ID" value="AAC75874.1"/>
    <property type="molecule type" value="Genomic_DNA"/>
</dbReference>
<dbReference type="EMBL" id="AP009048">
    <property type="protein sequence ID" value="BAE76904.1"/>
    <property type="molecule type" value="Genomic_DNA"/>
</dbReference>
<dbReference type="EMBL" id="L14681">
    <property type="status" value="NOT_ANNOTATED_CDS"/>
    <property type="molecule type" value="Unassigned_DNA"/>
</dbReference>
<dbReference type="PIR" id="D65066">
    <property type="entry name" value="D65066"/>
</dbReference>
<dbReference type="RefSeq" id="NP_417312.1">
    <property type="nucleotide sequence ID" value="NC_000913.3"/>
</dbReference>
<dbReference type="RefSeq" id="WP_000004616.1">
    <property type="nucleotide sequence ID" value="NZ_STEB01000034.1"/>
</dbReference>
<dbReference type="SMR" id="P39196"/>
<dbReference type="BioGRID" id="4263140">
    <property type="interactions" value="265"/>
</dbReference>
<dbReference type="FunCoup" id="P39196">
    <property type="interactions" value="75"/>
</dbReference>
<dbReference type="STRING" id="511145.b2835"/>
<dbReference type="TCDB" id="2.A.1.42.1">
    <property type="family name" value="the major facilitator superfamily (mfs)"/>
</dbReference>
<dbReference type="jPOST" id="P39196"/>
<dbReference type="PaxDb" id="511145-b2835"/>
<dbReference type="EnsemblBacteria" id="AAC75874">
    <property type="protein sequence ID" value="AAC75874"/>
    <property type="gene ID" value="b2835"/>
</dbReference>
<dbReference type="GeneID" id="947317"/>
<dbReference type="KEGG" id="ecj:JW2803"/>
<dbReference type="KEGG" id="eco:b2835"/>
<dbReference type="KEGG" id="ecoc:C3026_15570"/>
<dbReference type="PATRIC" id="fig|1411691.4.peg.3899"/>
<dbReference type="EchoBASE" id="EB2349"/>
<dbReference type="eggNOG" id="COG0477">
    <property type="taxonomic scope" value="Bacteria"/>
</dbReference>
<dbReference type="HOGENOM" id="CLU_047399_0_0_6"/>
<dbReference type="InParanoid" id="P39196"/>
<dbReference type="OMA" id="ICFGFNP"/>
<dbReference type="OrthoDB" id="9803968at2"/>
<dbReference type="PhylomeDB" id="P39196"/>
<dbReference type="BioCyc" id="EcoCyc:EG12455-MONOMER"/>
<dbReference type="BioCyc" id="MetaCyc:EG12455-MONOMER"/>
<dbReference type="PRO" id="PR:P39196"/>
<dbReference type="Proteomes" id="UP000000625">
    <property type="component" value="Chromosome"/>
</dbReference>
<dbReference type="GO" id="GO:0005886">
    <property type="term" value="C:plasma membrane"/>
    <property type="evidence" value="ECO:0000314"/>
    <property type="project" value="EcoCyc"/>
</dbReference>
<dbReference type="GO" id="GO:0051978">
    <property type="term" value="F:lysophospholipid:sodium symporter activity"/>
    <property type="evidence" value="ECO:0007669"/>
    <property type="project" value="InterPro"/>
</dbReference>
<dbReference type="GO" id="GO:0006650">
    <property type="term" value="P:glycerophospholipid metabolic process"/>
    <property type="evidence" value="ECO:0000315"/>
    <property type="project" value="EcoCyc"/>
</dbReference>
<dbReference type="GO" id="GO:0045332">
    <property type="term" value="P:phospholipid translocation"/>
    <property type="evidence" value="ECO:0000269"/>
    <property type="project" value="EcoCyc"/>
</dbReference>
<dbReference type="CDD" id="cd06173">
    <property type="entry name" value="MFS_MefA_like"/>
    <property type="match status" value="1"/>
</dbReference>
<dbReference type="FunFam" id="1.20.1250.20:FF:000091">
    <property type="entry name" value="Lysophospholipid transporter LplT"/>
    <property type="match status" value="1"/>
</dbReference>
<dbReference type="Gene3D" id="1.20.1250.20">
    <property type="entry name" value="MFS general substrate transporter like domains"/>
    <property type="match status" value="1"/>
</dbReference>
<dbReference type="HAMAP" id="MF_01585">
    <property type="entry name" value="MFS_LplT"/>
    <property type="match status" value="1"/>
</dbReference>
<dbReference type="InterPro" id="IPR023727">
    <property type="entry name" value="LysoPLipid__transptr_LplT"/>
</dbReference>
<dbReference type="InterPro" id="IPR011701">
    <property type="entry name" value="MFS"/>
</dbReference>
<dbReference type="InterPro" id="IPR036259">
    <property type="entry name" value="MFS_trans_sf"/>
</dbReference>
<dbReference type="NCBIfam" id="NF008397">
    <property type="entry name" value="PRK11195.1"/>
    <property type="match status" value="1"/>
</dbReference>
<dbReference type="PANTHER" id="PTHR43266">
    <property type="entry name" value="MACROLIDE-EFFLUX PROTEIN"/>
    <property type="match status" value="1"/>
</dbReference>
<dbReference type="PANTHER" id="PTHR43266:SF2">
    <property type="entry name" value="MAJOR FACILITATOR SUPERFAMILY (MFS) PROFILE DOMAIN-CONTAINING PROTEIN"/>
    <property type="match status" value="1"/>
</dbReference>
<dbReference type="Pfam" id="PF07690">
    <property type="entry name" value="MFS_1"/>
    <property type="match status" value="1"/>
</dbReference>
<dbReference type="SUPFAM" id="SSF103473">
    <property type="entry name" value="MFS general substrate transporter"/>
    <property type="match status" value="1"/>
</dbReference>
<name>LPLT_ECOLI</name>
<gene>
    <name type="primary">lplT</name>
    <name type="synonym">ygeD</name>
    <name type="ordered locus">b2835</name>
    <name type="ordered locus">JW2803</name>
</gene>
<feature type="chain" id="PRO_0000169338" description="Lysophospholipid transporter LplT">
    <location>
        <begin position="1"/>
        <end position="397"/>
    </location>
</feature>
<feature type="topological domain" description="Periplasmic" evidence="1">
    <location>
        <begin position="1"/>
        <end position="17"/>
    </location>
</feature>
<feature type="transmembrane region" description="Helical" evidence="1">
    <location>
        <begin position="18"/>
        <end position="38"/>
    </location>
</feature>
<feature type="topological domain" description="Cytoplasmic" evidence="1">
    <location>
        <begin position="39"/>
        <end position="52"/>
    </location>
</feature>
<feature type="transmembrane region" description="Helical" evidence="1">
    <location>
        <begin position="53"/>
        <end position="73"/>
    </location>
</feature>
<feature type="topological domain" description="Periplasmic" evidence="1">
    <location>
        <begin position="74"/>
        <end position="90"/>
    </location>
</feature>
<feature type="transmembrane region" description="Helical" evidence="1">
    <location>
        <begin position="91"/>
        <end position="111"/>
    </location>
</feature>
<feature type="topological domain" description="Cytoplasmic" evidence="1">
    <location>
        <begin position="112"/>
        <end position="144"/>
    </location>
</feature>
<feature type="transmembrane region" description="Helical" evidence="1">
    <location>
        <begin position="145"/>
        <end position="165"/>
    </location>
</feature>
<feature type="topological domain" description="Periplasmic" evidence="1">
    <location>
        <position position="166"/>
    </location>
</feature>
<feature type="transmembrane region" description="Helical" evidence="1">
    <location>
        <begin position="167"/>
        <end position="187"/>
    </location>
</feature>
<feature type="topological domain" description="Cytoplasmic" evidence="1">
    <location>
        <begin position="188"/>
        <end position="226"/>
    </location>
</feature>
<feature type="transmembrane region" description="Helical" evidence="1">
    <location>
        <begin position="227"/>
        <end position="247"/>
    </location>
</feature>
<feature type="topological domain" description="Periplasmic" evidence="1">
    <location>
        <begin position="248"/>
        <end position="256"/>
    </location>
</feature>
<feature type="transmembrane region" description="Helical" evidence="1">
    <location>
        <begin position="257"/>
        <end position="277"/>
    </location>
</feature>
<feature type="topological domain" description="Cytoplasmic" evidence="1">
    <location>
        <begin position="278"/>
        <end position="280"/>
    </location>
</feature>
<feature type="transmembrane region" description="Helical" evidence="1">
    <location>
        <begin position="281"/>
        <end position="301"/>
    </location>
</feature>
<feature type="topological domain" description="Periplasmic" evidence="1">
    <location>
        <begin position="302"/>
        <end position="304"/>
    </location>
</feature>
<feature type="transmembrane region" description="Helical" evidence="1">
    <location>
        <begin position="305"/>
        <end position="325"/>
    </location>
</feature>
<feature type="topological domain" description="Cytoplasmic" evidence="1">
    <location>
        <begin position="326"/>
        <end position="343"/>
    </location>
</feature>
<feature type="transmembrane region" description="Helical" evidence="1">
    <location>
        <begin position="344"/>
        <end position="364"/>
    </location>
</feature>
<feature type="topological domain" description="Periplasmic" evidence="1">
    <location>
        <begin position="365"/>
        <end position="366"/>
    </location>
</feature>
<feature type="transmembrane region" description="Helical" evidence="1">
    <location>
        <begin position="367"/>
        <end position="387"/>
    </location>
</feature>
<feature type="topological domain" description="Cytoplasmic" evidence="1">
    <location>
        <begin position="388"/>
        <end position="397"/>
    </location>
</feature>
<sequence length="397" mass="41656">MSESVHTNTSLWSKGMKAVIVAQFLSAFGDNALLFATLALLKAQFYPEWSQPILQMVFVGAYILFAPFVGQVADSFAKGRVMMFANGLKLLGAASICFGINPFLGYTLVGVGAAAYSPAKYGILGELTTGSKLVKANGLMEASTIAAILLGSVAGGVLADWHVLVALAACALAYGGAVVANIYIPKLAAARPGQSWNLINMTRSFLNACTSLWRNGETRFSLVGTSLFWGAGVTLRFLLVLWVPVALGITDNATPTYLNAMVAIGIVVGAGAAAKLVTLETVSRCMPAGILIGVVVLIFSLQHELLPAYALLMLIGVMGGFFVVPLNALLQERGKKSVGAGNAIAVQNLGENSAMLLMLGIYSLAVMIGIPVVPIGIGFGALFALAITALWIWQRRH</sequence>